<protein>
    <recommendedName>
        <fullName evidence="1">Imidazole glycerol phosphate synthase subunit HisF</fullName>
        <ecNumber evidence="1">4.3.2.10</ecNumber>
    </recommendedName>
    <alternativeName>
        <fullName evidence="1">IGP synthase cyclase subunit</fullName>
    </alternativeName>
    <alternativeName>
        <fullName evidence="1">IGP synthase subunit HisF</fullName>
    </alternativeName>
    <alternativeName>
        <fullName evidence="1">ImGP synthase subunit HisF</fullName>
        <shortName evidence="1">IGPS subunit HisF</shortName>
    </alternativeName>
</protein>
<feature type="chain" id="PRO_1000084074" description="Imidazole glycerol phosphate synthase subunit HisF">
    <location>
        <begin position="1"/>
        <end position="255"/>
    </location>
</feature>
<feature type="active site" evidence="1">
    <location>
        <position position="12"/>
    </location>
</feature>
<feature type="active site" evidence="1">
    <location>
        <position position="131"/>
    </location>
</feature>
<gene>
    <name evidence="1" type="primary">hisF</name>
    <name type="ordered locus">Sare_3413</name>
</gene>
<proteinExistence type="inferred from homology"/>
<name>HIS6_SALAI</name>
<keyword id="KW-0028">Amino-acid biosynthesis</keyword>
<keyword id="KW-0963">Cytoplasm</keyword>
<keyword id="KW-0368">Histidine biosynthesis</keyword>
<keyword id="KW-0456">Lyase</keyword>
<comment type="function">
    <text evidence="1">IGPS catalyzes the conversion of PRFAR and glutamine to IGP, AICAR and glutamate. The HisF subunit catalyzes the cyclization activity that produces IGP and AICAR from PRFAR using the ammonia provided by the HisH subunit.</text>
</comment>
<comment type="catalytic activity">
    <reaction evidence="1">
        <text>5-[(5-phospho-1-deoxy-D-ribulos-1-ylimino)methylamino]-1-(5-phospho-beta-D-ribosyl)imidazole-4-carboxamide + L-glutamine = D-erythro-1-(imidazol-4-yl)glycerol 3-phosphate + 5-amino-1-(5-phospho-beta-D-ribosyl)imidazole-4-carboxamide + L-glutamate + H(+)</text>
        <dbReference type="Rhea" id="RHEA:24793"/>
        <dbReference type="ChEBI" id="CHEBI:15378"/>
        <dbReference type="ChEBI" id="CHEBI:29985"/>
        <dbReference type="ChEBI" id="CHEBI:58278"/>
        <dbReference type="ChEBI" id="CHEBI:58359"/>
        <dbReference type="ChEBI" id="CHEBI:58475"/>
        <dbReference type="ChEBI" id="CHEBI:58525"/>
        <dbReference type="EC" id="4.3.2.10"/>
    </reaction>
</comment>
<comment type="pathway">
    <text evidence="1">Amino-acid biosynthesis; L-histidine biosynthesis; L-histidine from 5-phospho-alpha-D-ribose 1-diphosphate: step 5/9.</text>
</comment>
<comment type="subunit">
    <text evidence="1">Heterodimer of HisH and HisF.</text>
</comment>
<comment type="subcellular location">
    <subcellularLocation>
        <location evidence="1">Cytoplasm</location>
    </subcellularLocation>
</comment>
<comment type="similarity">
    <text evidence="1">Belongs to the HisA/HisF family.</text>
</comment>
<accession>A8LX55</accession>
<reference key="1">
    <citation type="submission" date="2007-10" db="EMBL/GenBank/DDBJ databases">
        <title>Complete sequence of Salinispora arenicola CNS-205.</title>
        <authorList>
            <consortium name="US DOE Joint Genome Institute"/>
            <person name="Copeland A."/>
            <person name="Lucas S."/>
            <person name="Lapidus A."/>
            <person name="Barry K."/>
            <person name="Glavina del Rio T."/>
            <person name="Dalin E."/>
            <person name="Tice H."/>
            <person name="Pitluck S."/>
            <person name="Foster B."/>
            <person name="Schmutz J."/>
            <person name="Larimer F."/>
            <person name="Land M."/>
            <person name="Hauser L."/>
            <person name="Kyrpides N."/>
            <person name="Ivanova N."/>
            <person name="Jensen P.R."/>
            <person name="Moore B.S."/>
            <person name="Penn K."/>
            <person name="Jenkins C."/>
            <person name="Udwary D."/>
            <person name="Xiang L."/>
            <person name="Gontang E."/>
            <person name="Richardson P."/>
        </authorList>
    </citation>
    <scope>NUCLEOTIDE SEQUENCE [LARGE SCALE GENOMIC DNA]</scope>
    <source>
        <strain>CNS-205</strain>
    </source>
</reference>
<evidence type="ECO:0000255" key="1">
    <source>
        <dbReference type="HAMAP-Rule" id="MF_01013"/>
    </source>
</evidence>
<dbReference type="EC" id="4.3.2.10" evidence="1"/>
<dbReference type="EMBL" id="CP000850">
    <property type="protein sequence ID" value="ABV99215.1"/>
    <property type="molecule type" value="Genomic_DNA"/>
</dbReference>
<dbReference type="SMR" id="A8LX55"/>
<dbReference type="STRING" id="391037.Sare_3413"/>
<dbReference type="KEGG" id="saq:Sare_3413"/>
<dbReference type="PATRIC" id="fig|391037.6.peg.3441"/>
<dbReference type="eggNOG" id="COG0107">
    <property type="taxonomic scope" value="Bacteria"/>
</dbReference>
<dbReference type="HOGENOM" id="CLU_048577_4_0_11"/>
<dbReference type="OrthoDB" id="9781903at2"/>
<dbReference type="UniPathway" id="UPA00031">
    <property type="reaction ID" value="UER00010"/>
</dbReference>
<dbReference type="GO" id="GO:0005737">
    <property type="term" value="C:cytoplasm"/>
    <property type="evidence" value="ECO:0007669"/>
    <property type="project" value="UniProtKB-SubCell"/>
</dbReference>
<dbReference type="GO" id="GO:0000107">
    <property type="term" value="F:imidazoleglycerol-phosphate synthase activity"/>
    <property type="evidence" value="ECO:0007669"/>
    <property type="project" value="UniProtKB-UniRule"/>
</dbReference>
<dbReference type="GO" id="GO:0016829">
    <property type="term" value="F:lyase activity"/>
    <property type="evidence" value="ECO:0007669"/>
    <property type="project" value="UniProtKB-KW"/>
</dbReference>
<dbReference type="GO" id="GO:0000105">
    <property type="term" value="P:L-histidine biosynthetic process"/>
    <property type="evidence" value="ECO:0007669"/>
    <property type="project" value="UniProtKB-UniRule"/>
</dbReference>
<dbReference type="CDD" id="cd04731">
    <property type="entry name" value="HisF"/>
    <property type="match status" value="1"/>
</dbReference>
<dbReference type="FunFam" id="3.20.20.70:FF:000006">
    <property type="entry name" value="Imidazole glycerol phosphate synthase subunit HisF"/>
    <property type="match status" value="1"/>
</dbReference>
<dbReference type="Gene3D" id="3.20.20.70">
    <property type="entry name" value="Aldolase class I"/>
    <property type="match status" value="1"/>
</dbReference>
<dbReference type="HAMAP" id="MF_01013">
    <property type="entry name" value="HisF"/>
    <property type="match status" value="1"/>
</dbReference>
<dbReference type="InterPro" id="IPR013785">
    <property type="entry name" value="Aldolase_TIM"/>
</dbReference>
<dbReference type="InterPro" id="IPR006062">
    <property type="entry name" value="His_biosynth"/>
</dbReference>
<dbReference type="InterPro" id="IPR004651">
    <property type="entry name" value="HisF"/>
</dbReference>
<dbReference type="InterPro" id="IPR050064">
    <property type="entry name" value="IGPS_HisA/HisF"/>
</dbReference>
<dbReference type="InterPro" id="IPR011060">
    <property type="entry name" value="RibuloseP-bd_barrel"/>
</dbReference>
<dbReference type="NCBIfam" id="TIGR00735">
    <property type="entry name" value="hisF"/>
    <property type="match status" value="1"/>
</dbReference>
<dbReference type="PANTHER" id="PTHR21235:SF2">
    <property type="entry name" value="IMIDAZOLE GLYCEROL PHOSPHATE SYNTHASE HISHF"/>
    <property type="match status" value="1"/>
</dbReference>
<dbReference type="PANTHER" id="PTHR21235">
    <property type="entry name" value="IMIDAZOLE GLYCEROL PHOSPHATE SYNTHASE SUBUNIT HISF/H IGP SYNTHASE SUBUNIT HISF/H"/>
    <property type="match status" value="1"/>
</dbReference>
<dbReference type="Pfam" id="PF00977">
    <property type="entry name" value="His_biosynth"/>
    <property type="match status" value="1"/>
</dbReference>
<dbReference type="SUPFAM" id="SSF51366">
    <property type="entry name" value="Ribulose-phoshate binding barrel"/>
    <property type="match status" value="1"/>
</dbReference>
<sequence>MSLAVRVIPCLDVDAGRVVKGVNFLDLRDAGDPVELAAAYDRAGADELTFLDVTASASDRGTMVDVVRRTAETVFIPLTVGGGIRRVGDVDTLLRAGADKVGVNTAAIVRPELIAEVADRFGRQVLVLSLDVRRAGPGTTTSGFEVTTHGGRRGTGIDAVDWARRGAELGAGEILLNSMDADGTKTGFDLDLIRAVRSVVDVPVVASGGAGAAGHFPPAIGAGADAVLAASVFHFGELTVGEVKDALRGKGHPVR</sequence>
<organism>
    <name type="scientific">Salinispora arenicola (strain CNS-205)</name>
    <dbReference type="NCBI Taxonomy" id="391037"/>
    <lineage>
        <taxon>Bacteria</taxon>
        <taxon>Bacillati</taxon>
        <taxon>Actinomycetota</taxon>
        <taxon>Actinomycetes</taxon>
        <taxon>Micromonosporales</taxon>
        <taxon>Micromonosporaceae</taxon>
        <taxon>Salinispora</taxon>
    </lineage>
</organism>